<name>SYI_CITK8</name>
<accession>A8ALT6</accession>
<protein>
    <recommendedName>
        <fullName evidence="1">Isoleucine--tRNA ligase</fullName>
        <ecNumber evidence="1">6.1.1.5</ecNumber>
    </recommendedName>
    <alternativeName>
        <fullName evidence="1">Isoleucyl-tRNA synthetase</fullName>
        <shortName evidence="1">IleRS</shortName>
    </alternativeName>
</protein>
<evidence type="ECO:0000255" key="1">
    <source>
        <dbReference type="HAMAP-Rule" id="MF_02002"/>
    </source>
</evidence>
<sequence>MSDYKSTLNLPETGFPMRGDLAKREPGMLARWTDDDLYGIIRAAKKGKKTFILHDGPPYANGSIHIGHSVNKILKDIIVKSKGLAGFDSPYVPGWDCHGLPIELKVEQEYGKPGEKFTAAEFRAKCREYAATQVDGQRKDFIRLGVLGDWSHPYLTMDFKTEANIIRALGKIIGNGHLHKGAKPVHWCVDCRSALAEAEVEYYDKTSPSIDVAFHAADQDAVKAKFGVSSVNGPISLVIWTTTPWTLPANRAISLAPDFDYALVQIDGQALILAKDLVESVMQRLGAADYTILGTVKGAELELLRFTHPFMDFDVPAILGDHVTLDAGTGAVHTAPGHGPDDYVIGQKYGLETANPVGPDGAYLPGTYPTLDGVNVFKANDIVVALLREKGALLHVEKLQHSYPCCWRHKTPIIFRATPQWFVSMDQKGLREQSLKEIKGVQWIPDWGQARIESMVANRPDWCISRQRTWGVPMSLFVHKDTEELHPRAIELMEEVAKRVEVDGIQAWWDLDPKEILGDDADQYVKVPDTLDVWFDSGSTHASVVDVRPEFAGHAADMYLEGSDQHRGWFMSSLMISTAMKGKAPYRQVLTHGFTVDGQGRKMSKSIGNTVSPQDVMNKLGADILRLWVASTDYTGEMAVSDEILKRAADSYRRIRNTARFLLANLNGFDPVKDMVKPEEMVVLDRWAVGCAKAAQDDILKAYEAYDFHEVVQRLMRFCSVEMGSFYLDIIKDRQYTAKADSVARRSCQSALYHIAEALVRWMAPIMSFTADEIWGYLPGDREKYVFTGEWYEGLFGLGETEAMNDAYWDELLKVRGEVNKVIEQARADKKVGGSLEAAVTLYAEPELAAKLTALGDELRFVLLTSGAKVADYAEASADAQQSELLKGLKVALSKAEGEKCPRCWHYTTDVGKVAEHAEICGRCVSNIAGDGEKRKFA</sequence>
<dbReference type="EC" id="6.1.1.5" evidence="1"/>
<dbReference type="EMBL" id="CP000822">
    <property type="protein sequence ID" value="ABV14449.1"/>
    <property type="molecule type" value="Genomic_DNA"/>
</dbReference>
<dbReference type="RefSeq" id="WP_012134152.1">
    <property type="nucleotide sequence ID" value="NC_009792.1"/>
</dbReference>
<dbReference type="SMR" id="A8ALT6"/>
<dbReference type="STRING" id="290338.CKO_03366"/>
<dbReference type="GeneID" id="45137126"/>
<dbReference type="KEGG" id="cko:CKO_03366"/>
<dbReference type="HOGENOM" id="CLU_001493_7_1_6"/>
<dbReference type="OrthoDB" id="9810365at2"/>
<dbReference type="Proteomes" id="UP000008148">
    <property type="component" value="Chromosome"/>
</dbReference>
<dbReference type="GO" id="GO:0005829">
    <property type="term" value="C:cytosol"/>
    <property type="evidence" value="ECO:0007669"/>
    <property type="project" value="TreeGrafter"/>
</dbReference>
<dbReference type="GO" id="GO:0002161">
    <property type="term" value="F:aminoacyl-tRNA deacylase activity"/>
    <property type="evidence" value="ECO:0007669"/>
    <property type="project" value="InterPro"/>
</dbReference>
<dbReference type="GO" id="GO:0005524">
    <property type="term" value="F:ATP binding"/>
    <property type="evidence" value="ECO:0007669"/>
    <property type="project" value="UniProtKB-UniRule"/>
</dbReference>
<dbReference type="GO" id="GO:0004822">
    <property type="term" value="F:isoleucine-tRNA ligase activity"/>
    <property type="evidence" value="ECO:0007669"/>
    <property type="project" value="UniProtKB-UniRule"/>
</dbReference>
<dbReference type="GO" id="GO:0000049">
    <property type="term" value="F:tRNA binding"/>
    <property type="evidence" value="ECO:0007669"/>
    <property type="project" value="InterPro"/>
</dbReference>
<dbReference type="GO" id="GO:0008270">
    <property type="term" value="F:zinc ion binding"/>
    <property type="evidence" value="ECO:0007669"/>
    <property type="project" value="UniProtKB-UniRule"/>
</dbReference>
<dbReference type="GO" id="GO:0006428">
    <property type="term" value="P:isoleucyl-tRNA aminoacylation"/>
    <property type="evidence" value="ECO:0007669"/>
    <property type="project" value="UniProtKB-UniRule"/>
</dbReference>
<dbReference type="CDD" id="cd07960">
    <property type="entry name" value="Anticodon_Ia_Ile_BEm"/>
    <property type="match status" value="1"/>
</dbReference>
<dbReference type="CDD" id="cd00818">
    <property type="entry name" value="IleRS_core"/>
    <property type="match status" value="1"/>
</dbReference>
<dbReference type="FunFam" id="1.10.730.20:FF:000001">
    <property type="entry name" value="Isoleucine--tRNA ligase"/>
    <property type="match status" value="1"/>
</dbReference>
<dbReference type="FunFam" id="3.40.50.620:FF:000042">
    <property type="entry name" value="Isoleucine--tRNA ligase"/>
    <property type="match status" value="1"/>
</dbReference>
<dbReference type="FunFam" id="3.40.50.620:FF:000048">
    <property type="entry name" value="Isoleucine--tRNA ligase"/>
    <property type="match status" value="1"/>
</dbReference>
<dbReference type="FunFam" id="3.90.740.10:FF:000002">
    <property type="entry name" value="Isoleucine--tRNA ligase"/>
    <property type="match status" value="1"/>
</dbReference>
<dbReference type="Gene3D" id="1.10.730.20">
    <property type="match status" value="1"/>
</dbReference>
<dbReference type="Gene3D" id="3.40.50.620">
    <property type="entry name" value="HUPs"/>
    <property type="match status" value="2"/>
</dbReference>
<dbReference type="Gene3D" id="3.90.740.10">
    <property type="entry name" value="Valyl/Leucyl/Isoleucyl-tRNA synthetase, editing domain"/>
    <property type="match status" value="1"/>
</dbReference>
<dbReference type="HAMAP" id="MF_02002">
    <property type="entry name" value="Ile_tRNA_synth_type1"/>
    <property type="match status" value="1"/>
</dbReference>
<dbReference type="InterPro" id="IPR001412">
    <property type="entry name" value="aa-tRNA-synth_I_CS"/>
</dbReference>
<dbReference type="InterPro" id="IPR002300">
    <property type="entry name" value="aa-tRNA-synth_Ia"/>
</dbReference>
<dbReference type="InterPro" id="IPR033708">
    <property type="entry name" value="Anticodon_Ile_BEm"/>
</dbReference>
<dbReference type="InterPro" id="IPR002301">
    <property type="entry name" value="Ile-tRNA-ligase"/>
</dbReference>
<dbReference type="InterPro" id="IPR023585">
    <property type="entry name" value="Ile-tRNA-ligase_type1"/>
</dbReference>
<dbReference type="InterPro" id="IPR050081">
    <property type="entry name" value="Ile-tRNA_ligase"/>
</dbReference>
<dbReference type="InterPro" id="IPR013155">
    <property type="entry name" value="M/V/L/I-tRNA-synth_anticd-bd"/>
</dbReference>
<dbReference type="InterPro" id="IPR014729">
    <property type="entry name" value="Rossmann-like_a/b/a_fold"/>
</dbReference>
<dbReference type="InterPro" id="IPR009080">
    <property type="entry name" value="tRNAsynth_Ia_anticodon-bd"/>
</dbReference>
<dbReference type="InterPro" id="IPR009008">
    <property type="entry name" value="Val/Leu/Ile-tRNA-synth_edit"/>
</dbReference>
<dbReference type="InterPro" id="IPR010663">
    <property type="entry name" value="Znf_FPG/IleRS"/>
</dbReference>
<dbReference type="NCBIfam" id="TIGR00392">
    <property type="entry name" value="ileS"/>
    <property type="match status" value="1"/>
</dbReference>
<dbReference type="PANTHER" id="PTHR42765:SF1">
    <property type="entry name" value="ISOLEUCINE--TRNA LIGASE, MITOCHONDRIAL"/>
    <property type="match status" value="1"/>
</dbReference>
<dbReference type="PANTHER" id="PTHR42765">
    <property type="entry name" value="SOLEUCYL-TRNA SYNTHETASE"/>
    <property type="match status" value="1"/>
</dbReference>
<dbReference type="Pfam" id="PF08264">
    <property type="entry name" value="Anticodon_1"/>
    <property type="match status" value="1"/>
</dbReference>
<dbReference type="Pfam" id="PF00133">
    <property type="entry name" value="tRNA-synt_1"/>
    <property type="match status" value="1"/>
</dbReference>
<dbReference type="Pfam" id="PF06827">
    <property type="entry name" value="zf-FPG_IleRS"/>
    <property type="match status" value="1"/>
</dbReference>
<dbReference type="PRINTS" id="PR00984">
    <property type="entry name" value="TRNASYNTHILE"/>
</dbReference>
<dbReference type="SUPFAM" id="SSF47323">
    <property type="entry name" value="Anticodon-binding domain of a subclass of class I aminoacyl-tRNA synthetases"/>
    <property type="match status" value="1"/>
</dbReference>
<dbReference type="SUPFAM" id="SSF52374">
    <property type="entry name" value="Nucleotidylyl transferase"/>
    <property type="match status" value="1"/>
</dbReference>
<dbReference type="SUPFAM" id="SSF50677">
    <property type="entry name" value="ValRS/IleRS/LeuRS editing domain"/>
    <property type="match status" value="1"/>
</dbReference>
<dbReference type="PROSITE" id="PS00178">
    <property type="entry name" value="AA_TRNA_LIGASE_I"/>
    <property type="match status" value="1"/>
</dbReference>
<feature type="chain" id="PRO_1000022058" description="Isoleucine--tRNA ligase">
    <location>
        <begin position="1"/>
        <end position="938"/>
    </location>
</feature>
<feature type="short sequence motif" description="'HIGH' region">
    <location>
        <begin position="58"/>
        <end position="68"/>
    </location>
</feature>
<feature type="short sequence motif" description="'KMSKS' region">
    <location>
        <begin position="602"/>
        <end position="606"/>
    </location>
</feature>
<feature type="binding site" evidence="1">
    <location>
        <position position="561"/>
    </location>
    <ligand>
        <name>L-isoleucyl-5'-AMP</name>
        <dbReference type="ChEBI" id="CHEBI:178002"/>
    </ligand>
</feature>
<feature type="binding site" evidence="1">
    <location>
        <position position="605"/>
    </location>
    <ligand>
        <name>ATP</name>
        <dbReference type="ChEBI" id="CHEBI:30616"/>
    </ligand>
</feature>
<feature type="binding site" evidence="1">
    <location>
        <position position="901"/>
    </location>
    <ligand>
        <name>Zn(2+)</name>
        <dbReference type="ChEBI" id="CHEBI:29105"/>
    </ligand>
</feature>
<feature type="binding site" evidence="1">
    <location>
        <position position="904"/>
    </location>
    <ligand>
        <name>Zn(2+)</name>
        <dbReference type="ChEBI" id="CHEBI:29105"/>
    </ligand>
</feature>
<feature type="binding site" evidence="1">
    <location>
        <position position="921"/>
    </location>
    <ligand>
        <name>Zn(2+)</name>
        <dbReference type="ChEBI" id="CHEBI:29105"/>
    </ligand>
</feature>
<feature type="binding site" evidence="1">
    <location>
        <position position="924"/>
    </location>
    <ligand>
        <name>Zn(2+)</name>
        <dbReference type="ChEBI" id="CHEBI:29105"/>
    </ligand>
</feature>
<reference key="1">
    <citation type="submission" date="2007-08" db="EMBL/GenBank/DDBJ databases">
        <authorList>
            <consortium name="The Citrobacter koseri Genome Sequencing Project"/>
            <person name="McClelland M."/>
            <person name="Sanderson E.K."/>
            <person name="Porwollik S."/>
            <person name="Spieth J."/>
            <person name="Clifton W.S."/>
            <person name="Latreille P."/>
            <person name="Courtney L."/>
            <person name="Wang C."/>
            <person name="Pepin K."/>
            <person name="Bhonagiri V."/>
            <person name="Nash W."/>
            <person name="Johnson M."/>
            <person name="Thiruvilangam P."/>
            <person name="Wilson R."/>
        </authorList>
    </citation>
    <scope>NUCLEOTIDE SEQUENCE [LARGE SCALE GENOMIC DNA]</scope>
    <source>
        <strain>ATCC BAA-895 / CDC 4225-83 / SGSC4696</strain>
    </source>
</reference>
<comment type="function">
    <text evidence="1">Catalyzes the attachment of isoleucine to tRNA(Ile). As IleRS can inadvertently accommodate and process structurally similar amino acids such as valine, to avoid such errors it has two additional distinct tRNA(Ile)-dependent editing activities. One activity is designated as 'pretransfer' editing and involves the hydrolysis of activated Val-AMP. The other activity is designated 'posttransfer' editing and involves deacylation of mischarged Val-tRNA(Ile).</text>
</comment>
<comment type="catalytic activity">
    <reaction evidence="1">
        <text>tRNA(Ile) + L-isoleucine + ATP = L-isoleucyl-tRNA(Ile) + AMP + diphosphate</text>
        <dbReference type="Rhea" id="RHEA:11060"/>
        <dbReference type="Rhea" id="RHEA-COMP:9666"/>
        <dbReference type="Rhea" id="RHEA-COMP:9695"/>
        <dbReference type="ChEBI" id="CHEBI:30616"/>
        <dbReference type="ChEBI" id="CHEBI:33019"/>
        <dbReference type="ChEBI" id="CHEBI:58045"/>
        <dbReference type="ChEBI" id="CHEBI:78442"/>
        <dbReference type="ChEBI" id="CHEBI:78528"/>
        <dbReference type="ChEBI" id="CHEBI:456215"/>
        <dbReference type="EC" id="6.1.1.5"/>
    </reaction>
</comment>
<comment type="cofactor">
    <cofactor evidence="1">
        <name>Zn(2+)</name>
        <dbReference type="ChEBI" id="CHEBI:29105"/>
    </cofactor>
    <text evidence="1">Binds 1 zinc ion per subunit.</text>
</comment>
<comment type="subunit">
    <text evidence="1">Monomer.</text>
</comment>
<comment type="subcellular location">
    <subcellularLocation>
        <location evidence="1">Cytoplasm</location>
    </subcellularLocation>
</comment>
<comment type="domain">
    <text evidence="1">IleRS has two distinct active sites: one for aminoacylation and one for editing. The misactivated valine is translocated from the active site to the editing site, which sterically excludes the correctly activated isoleucine. The single editing site contains two valyl binding pockets, one specific for each substrate (Val-AMP or Val-tRNA(Ile)).</text>
</comment>
<comment type="similarity">
    <text evidence="1">Belongs to the class-I aminoacyl-tRNA synthetase family. IleS type 1 subfamily.</text>
</comment>
<organism>
    <name type="scientific">Citrobacter koseri (strain ATCC BAA-895 / CDC 4225-83 / SGSC4696)</name>
    <dbReference type="NCBI Taxonomy" id="290338"/>
    <lineage>
        <taxon>Bacteria</taxon>
        <taxon>Pseudomonadati</taxon>
        <taxon>Pseudomonadota</taxon>
        <taxon>Gammaproteobacteria</taxon>
        <taxon>Enterobacterales</taxon>
        <taxon>Enterobacteriaceae</taxon>
        <taxon>Citrobacter</taxon>
    </lineage>
</organism>
<keyword id="KW-0030">Aminoacyl-tRNA synthetase</keyword>
<keyword id="KW-0067">ATP-binding</keyword>
<keyword id="KW-0963">Cytoplasm</keyword>
<keyword id="KW-0436">Ligase</keyword>
<keyword id="KW-0479">Metal-binding</keyword>
<keyword id="KW-0547">Nucleotide-binding</keyword>
<keyword id="KW-0648">Protein biosynthesis</keyword>
<keyword id="KW-1185">Reference proteome</keyword>
<keyword id="KW-0862">Zinc</keyword>
<gene>
    <name evidence="1" type="primary">ileS</name>
    <name type="ordered locus">CKO_03366</name>
</gene>
<proteinExistence type="inferred from homology"/>